<gene>
    <name type="primary">PTP4A1</name>
    <name type="synonym">PRL1</name>
    <name type="synonym">PTPCAAX1</name>
</gene>
<sequence length="173" mass="19815">MARMNRPAPVEVTYKNMRFLITHNPTNATLNKFIEELKKYGVTTIVRVCEATYDTTLVEKEGIHVLDWPFDDGAPPSNQIVDDWLSLVKIKFREEPGCCIAVHCVAGLGRAPVLVALALIEGGMKYEDAVQFIRQKRRGAFNSKQLLYLEKYRPKMRLRFKDSNGHRNNCCIQ</sequence>
<dbReference type="EC" id="3.1.3.48" evidence="11"/>
<dbReference type="EMBL" id="U48296">
    <property type="protein sequence ID" value="AAB40597.1"/>
    <property type="molecule type" value="mRNA"/>
</dbReference>
<dbReference type="EMBL" id="AF051160">
    <property type="protein sequence ID" value="AAC39836.1"/>
    <property type="molecule type" value="Genomic_DNA"/>
</dbReference>
<dbReference type="EMBL" id="AK312526">
    <property type="protein sequence ID" value="BAG35425.1"/>
    <property type="molecule type" value="mRNA"/>
</dbReference>
<dbReference type="EMBL" id="CR749458">
    <property type="protein sequence ID" value="CAH18292.1"/>
    <property type="molecule type" value="mRNA"/>
</dbReference>
<dbReference type="EMBL" id="AL135905">
    <property type="status" value="NOT_ANNOTATED_CDS"/>
    <property type="molecule type" value="Genomic_DNA"/>
</dbReference>
<dbReference type="EMBL" id="CH471143">
    <property type="protein sequence ID" value="EAW88494.1"/>
    <property type="molecule type" value="Genomic_DNA"/>
</dbReference>
<dbReference type="EMBL" id="BC023975">
    <property type="protein sequence ID" value="AAH23975.1"/>
    <property type="molecule type" value="mRNA"/>
</dbReference>
<dbReference type="EMBL" id="BC045571">
    <property type="protein sequence ID" value="AAH45571.1"/>
    <property type="molecule type" value="mRNA"/>
</dbReference>
<dbReference type="EMBL" id="U69701">
    <property type="protein sequence ID" value="AAB09080.1"/>
    <property type="molecule type" value="mRNA"/>
</dbReference>
<dbReference type="CCDS" id="CCDS4965.1"/>
<dbReference type="RefSeq" id="NP_001372183.1">
    <property type="nucleotide sequence ID" value="NM_001385254.1"/>
</dbReference>
<dbReference type="RefSeq" id="NP_001372184.1">
    <property type="nucleotide sequence ID" value="NM_001385255.1"/>
</dbReference>
<dbReference type="RefSeq" id="NP_001372185.1">
    <property type="nucleotide sequence ID" value="NM_001385256.1"/>
</dbReference>
<dbReference type="RefSeq" id="NP_001372186.1">
    <property type="nucleotide sequence ID" value="NM_001385257.1"/>
</dbReference>
<dbReference type="RefSeq" id="NP_001372187.1">
    <property type="nucleotide sequence ID" value="NM_001385258.1"/>
</dbReference>
<dbReference type="RefSeq" id="NP_001372188.1">
    <property type="nucleotide sequence ID" value="NM_001385259.1"/>
</dbReference>
<dbReference type="RefSeq" id="NP_001372189.1">
    <property type="nucleotide sequence ID" value="NM_001385260.1"/>
</dbReference>
<dbReference type="RefSeq" id="NP_001372191.1">
    <property type="nucleotide sequence ID" value="NM_001385262.2"/>
</dbReference>
<dbReference type="RefSeq" id="NP_001372196.1">
    <property type="nucleotide sequence ID" value="NM_001385267.2"/>
</dbReference>
<dbReference type="RefSeq" id="NP_003454.1">
    <property type="nucleotide sequence ID" value="NM_003463.5"/>
</dbReference>
<dbReference type="RefSeq" id="XP_011534413.1">
    <property type="nucleotide sequence ID" value="XM_011536111.1"/>
</dbReference>
<dbReference type="RefSeq" id="XP_011534414.1">
    <property type="nucleotide sequence ID" value="XM_011536112.1"/>
</dbReference>
<dbReference type="RefSeq" id="XP_016866759.1">
    <property type="nucleotide sequence ID" value="XM_017011270.1"/>
</dbReference>
<dbReference type="RefSeq" id="XP_016866760.1">
    <property type="nucleotide sequence ID" value="XM_017011271.1"/>
</dbReference>
<dbReference type="PDB" id="1RXD">
    <property type="method" value="X-ray"/>
    <property type="resolution" value="1.90 A"/>
    <property type="chains" value="A/B/C=2-160"/>
</dbReference>
<dbReference type="PDB" id="1XM2">
    <property type="method" value="X-ray"/>
    <property type="resolution" value="2.70 A"/>
    <property type="chains" value="A/B/C/D/E/F=1-173"/>
</dbReference>
<dbReference type="PDB" id="5BX1">
    <property type="method" value="X-ray"/>
    <property type="resolution" value="1.90 A"/>
    <property type="chains" value="A=4-160"/>
</dbReference>
<dbReference type="PDBsum" id="1RXD"/>
<dbReference type="PDBsum" id="1XM2"/>
<dbReference type="PDBsum" id="5BX1"/>
<dbReference type="BMRB" id="Q93096"/>
<dbReference type="SMR" id="Q93096"/>
<dbReference type="BioGRID" id="113578">
    <property type="interactions" value="120"/>
</dbReference>
<dbReference type="FunCoup" id="Q93096">
    <property type="interactions" value="2032"/>
</dbReference>
<dbReference type="IntAct" id="Q93096">
    <property type="interactions" value="46"/>
</dbReference>
<dbReference type="MINT" id="Q93096"/>
<dbReference type="STRING" id="9606.ENSP00000497588"/>
<dbReference type="BindingDB" id="Q93096"/>
<dbReference type="ChEMBL" id="CHEMBL1075169"/>
<dbReference type="DrugCentral" id="Q93096"/>
<dbReference type="DEPOD" id="PTP4A1"/>
<dbReference type="GlyGen" id="Q93096">
    <property type="glycosylation" value="2 sites, 1 N-linked glycan (1 site), 1 O-linked glycan (1 site)"/>
</dbReference>
<dbReference type="iPTMnet" id="Q93096"/>
<dbReference type="PhosphoSitePlus" id="Q93096"/>
<dbReference type="SwissPalm" id="Q93096"/>
<dbReference type="BioMuta" id="PTP4A1"/>
<dbReference type="DMDM" id="68566217"/>
<dbReference type="jPOST" id="Q93096"/>
<dbReference type="MassIVE" id="Q93096"/>
<dbReference type="PaxDb" id="9606-ENSP00000359685"/>
<dbReference type="PeptideAtlas" id="Q93096"/>
<dbReference type="ProteomicsDB" id="75721"/>
<dbReference type="Pumba" id="Q93096"/>
<dbReference type="Antibodypedia" id="1094">
    <property type="antibodies" value="282 antibodies from 33 providers"/>
</dbReference>
<dbReference type="DNASU" id="7803"/>
<dbReference type="Ensembl" id="ENST00000626021.3">
    <property type="protein sequence ID" value="ENSP00000485687.1"/>
    <property type="gene ID" value="ENSG00000112245.14"/>
</dbReference>
<dbReference type="Ensembl" id="ENST00000648894.1">
    <property type="protein sequence ID" value="ENSP00000497588.1"/>
    <property type="gene ID" value="ENSG00000112245.14"/>
</dbReference>
<dbReference type="Ensembl" id="ENST00000672924.1">
    <property type="protein sequence ID" value="ENSP00000500952.1"/>
    <property type="gene ID" value="ENSG00000112245.14"/>
</dbReference>
<dbReference type="Ensembl" id="ENST00000673199.1">
    <property type="protein sequence ID" value="ENSP00000500859.1"/>
    <property type="gene ID" value="ENSG00000112245.14"/>
</dbReference>
<dbReference type="GeneID" id="7803"/>
<dbReference type="KEGG" id="hsa:7803"/>
<dbReference type="MANE-Select" id="ENST00000626021.3">
    <property type="protein sequence ID" value="ENSP00000485687.1"/>
    <property type="RefSeq nucleotide sequence ID" value="NM_003463.5"/>
    <property type="RefSeq protein sequence ID" value="NP_003454.1"/>
</dbReference>
<dbReference type="UCSC" id="uc003pel.5">
    <property type="organism name" value="human"/>
</dbReference>
<dbReference type="AGR" id="HGNC:9634"/>
<dbReference type="CTD" id="7803"/>
<dbReference type="DisGeNET" id="7803"/>
<dbReference type="GeneCards" id="PTP4A1"/>
<dbReference type="HGNC" id="HGNC:9634">
    <property type="gene designation" value="PTP4A1"/>
</dbReference>
<dbReference type="HPA" id="ENSG00000112245">
    <property type="expression patterns" value="Tissue enhanced (liver, skeletal muscle)"/>
</dbReference>
<dbReference type="MIM" id="601585">
    <property type="type" value="gene"/>
</dbReference>
<dbReference type="neXtProt" id="NX_Q93096"/>
<dbReference type="OpenTargets" id="ENSG00000112245"/>
<dbReference type="PharmGKB" id="PA33977"/>
<dbReference type="VEuPathDB" id="HostDB:ENSG00000112245"/>
<dbReference type="eggNOG" id="KOG2836">
    <property type="taxonomic scope" value="Eukaryota"/>
</dbReference>
<dbReference type="GeneTree" id="ENSGT00940000154406"/>
<dbReference type="HOGENOM" id="CLU_099263_1_0_1"/>
<dbReference type="InParanoid" id="Q93096"/>
<dbReference type="OMA" id="IQVHGWT"/>
<dbReference type="OrthoDB" id="5632at2759"/>
<dbReference type="PAN-GO" id="Q93096">
    <property type="GO annotations" value="4 GO annotations based on evolutionary models"/>
</dbReference>
<dbReference type="PhylomeDB" id="Q93096"/>
<dbReference type="TreeFam" id="TF313384"/>
<dbReference type="BRENDA" id="3.1.3.16">
    <property type="organism ID" value="2681"/>
</dbReference>
<dbReference type="PathwayCommons" id="Q93096"/>
<dbReference type="SignaLink" id="Q93096"/>
<dbReference type="SIGNOR" id="Q93096"/>
<dbReference type="BioGRID-ORCS" id="7803">
    <property type="hits" value="123 hits in 1126 CRISPR screens"/>
</dbReference>
<dbReference type="ChiTaRS" id="PTP4A1">
    <property type="organism name" value="human"/>
</dbReference>
<dbReference type="EvolutionaryTrace" id="Q93096"/>
<dbReference type="GeneWiki" id="PTP4A1"/>
<dbReference type="GenomeRNAi" id="7803"/>
<dbReference type="Pharos" id="Q93096">
    <property type="development level" value="Tchem"/>
</dbReference>
<dbReference type="PRO" id="PR:Q93096"/>
<dbReference type="Proteomes" id="UP000005640">
    <property type="component" value="Chromosome 6"/>
</dbReference>
<dbReference type="RNAct" id="Q93096">
    <property type="molecule type" value="protein"/>
</dbReference>
<dbReference type="Bgee" id="ENSG00000112245">
    <property type="expression patterns" value="Expressed in adrenal tissue and 103 other cell types or tissues"/>
</dbReference>
<dbReference type="ExpressionAtlas" id="Q93096">
    <property type="expression patterns" value="baseline and differential"/>
</dbReference>
<dbReference type="GO" id="GO:0005737">
    <property type="term" value="C:cytoplasm"/>
    <property type="evidence" value="ECO:0000314"/>
    <property type="project" value="UniProtKB"/>
</dbReference>
<dbReference type="GO" id="GO:0009898">
    <property type="term" value="C:cytoplasmic side of plasma membrane"/>
    <property type="evidence" value="ECO:0000314"/>
    <property type="project" value="UniProtKB"/>
</dbReference>
<dbReference type="GO" id="GO:0005769">
    <property type="term" value="C:early endosome"/>
    <property type="evidence" value="ECO:0007669"/>
    <property type="project" value="UniProtKB-SubCell"/>
</dbReference>
<dbReference type="GO" id="GO:0005783">
    <property type="term" value="C:endoplasmic reticulum"/>
    <property type="evidence" value="ECO:0007669"/>
    <property type="project" value="UniProtKB-SubCell"/>
</dbReference>
<dbReference type="GO" id="GO:0005634">
    <property type="term" value="C:nucleus"/>
    <property type="evidence" value="ECO:0000318"/>
    <property type="project" value="GO_Central"/>
</dbReference>
<dbReference type="GO" id="GO:0005819">
    <property type="term" value="C:spindle"/>
    <property type="evidence" value="ECO:0007669"/>
    <property type="project" value="UniProtKB-SubCell"/>
</dbReference>
<dbReference type="GO" id="GO:0004725">
    <property type="term" value="F:protein tyrosine phosphatase activity"/>
    <property type="evidence" value="ECO:0000318"/>
    <property type="project" value="GO_Central"/>
</dbReference>
<dbReference type="GO" id="GO:0030335">
    <property type="term" value="P:positive regulation of cell migration"/>
    <property type="evidence" value="ECO:0000318"/>
    <property type="project" value="GO_Central"/>
</dbReference>
<dbReference type="CDD" id="cd18537">
    <property type="entry name" value="PTP-IVa1"/>
    <property type="match status" value="1"/>
</dbReference>
<dbReference type="FunFam" id="3.90.190.10:FF:000012">
    <property type="entry name" value="protein tyrosine phosphatase type IVA 1"/>
    <property type="match status" value="1"/>
</dbReference>
<dbReference type="Gene3D" id="3.90.190.10">
    <property type="entry name" value="Protein tyrosine phosphatase superfamily"/>
    <property type="match status" value="1"/>
</dbReference>
<dbReference type="InterPro" id="IPR029021">
    <property type="entry name" value="Prot-tyrosine_phosphatase-like"/>
</dbReference>
<dbReference type="InterPro" id="IPR050561">
    <property type="entry name" value="PTP"/>
</dbReference>
<dbReference type="InterPro" id="IPR003595">
    <property type="entry name" value="Tyr_Pase_cat"/>
</dbReference>
<dbReference type="InterPro" id="IPR000387">
    <property type="entry name" value="Tyr_Pase_dom"/>
</dbReference>
<dbReference type="InterPro" id="IPR020422">
    <property type="entry name" value="TYR_PHOSPHATASE_DUAL_dom"/>
</dbReference>
<dbReference type="PANTHER" id="PTHR23339">
    <property type="entry name" value="TYROSINE SPECIFIC PROTEIN PHOSPHATASE AND DUAL SPECIFICITY PROTEIN PHOSPHATASE"/>
    <property type="match status" value="1"/>
</dbReference>
<dbReference type="Pfam" id="PF22785">
    <property type="entry name" value="Tc-R-P"/>
    <property type="match status" value="1"/>
</dbReference>
<dbReference type="SMART" id="SM00404">
    <property type="entry name" value="PTPc_motif"/>
    <property type="match status" value="1"/>
</dbReference>
<dbReference type="SUPFAM" id="SSF52799">
    <property type="entry name" value="(Phosphotyrosine protein) phosphatases II"/>
    <property type="match status" value="1"/>
</dbReference>
<dbReference type="PROSITE" id="PS50056">
    <property type="entry name" value="TYR_PHOSPHATASE_2"/>
    <property type="match status" value="1"/>
</dbReference>
<dbReference type="PROSITE" id="PS50054">
    <property type="entry name" value="TYR_PHOSPHATASE_DUAL"/>
    <property type="match status" value="1"/>
</dbReference>
<reference key="1">
    <citation type="journal article" date="1996" name="Cancer Lett.">
        <title>Prenylation of oncogenic human PTP(CAAX) protein tyrosine phosphatases.</title>
        <authorList>
            <person name="Cates C.A."/>
            <person name="Michael R.L."/>
            <person name="Stayrook K.R."/>
            <person name="Harvey K.A."/>
            <person name="Burke Y.D."/>
            <person name="Randall S.K."/>
            <person name="Crowell P.L."/>
            <person name="Crowell D.N."/>
        </authorList>
    </citation>
    <scope>NUCLEOTIDE SEQUENCE [MRNA]</scope>
    <scope>CATALYTIC ACTIVITY</scope>
    <scope>ISOPRENYLATION AT CYS-170</scope>
    <source>
        <tissue>Mammary carcinoma</tissue>
    </source>
</reference>
<reference key="2">
    <citation type="journal article" date="1998" name="J. Biol. Chem.">
        <title>The gene encoding human nuclear protein tyrosine phosphatase, PRL-1. Cloning, chromosomal localization, and identification of an intron enhancer.</title>
        <authorList>
            <person name="Peng Y."/>
            <person name="Genin A."/>
            <person name="Spinner N.B."/>
            <person name="Diamond R.H."/>
            <person name="Taub R."/>
        </authorList>
    </citation>
    <scope>NUCLEOTIDE SEQUENCE [GENOMIC DNA]</scope>
    <source>
        <tissue>Regenerating liver</tissue>
    </source>
</reference>
<reference key="3">
    <citation type="journal article" date="2004" name="Nat. Genet.">
        <title>Complete sequencing and characterization of 21,243 full-length human cDNAs.</title>
        <authorList>
            <person name="Ota T."/>
            <person name="Suzuki Y."/>
            <person name="Nishikawa T."/>
            <person name="Otsuki T."/>
            <person name="Sugiyama T."/>
            <person name="Irie R."/>
            <person name="Wakamatsu A."/>
            <person name="Hayashi K."/>
            <person name="Sato H."/>
            <person name="Nagai K."/>
            <person name="Kimura K."/>
            <person name="Makita H."/>
            <person name="Sekine M."/>
            <person name="Obayashi M."/>
            <person name="Nishi T."/>
            <person name="Shibahara T."/>
            <person name="Tanaka T."/>
            <person name="Ishii S."/>
            <person name="Yamamoto J."/>
            <person name="Saito K."/>
            <person name="Kawai Y."/>
            <person name="Isono Y."/>
            <person name="Nakamura Y."/>
            <person name="Nagahari K."/>
            <person name="Murakami K."/>
            <person name="Yasuda T."/>
            <person name="Iwayanagi T."/>
            <person name="Wagatsuma M."/>
            <person name="Shiratori A."/>
            <person name="Sudo H."/>
            <person name="Hosoiri T."/>
            <person name="Kaku Y."/>
            <person name="Kodaira H."/>
            <person name="Kondo H."/>
            <person name="Sugawara M."/>
            <person name="Takahashi M."/>
            <person name="Kanda K."/>
            <person name="Yokoi T."/>
            <person name="Furuya T."/>
            <person name="Kikkawa E."/>
            <person name="Omura Y."/>
            <person name="Abe K."/>
            <person name="Kamihara K."/>
            <person name="Katsuta N."/>
            <person name="Sato K."/>
            <person name="Tanikawa M."/>
            <person name="Yamazaki M."/>
            <person name="Ninomiya K."/>
            <person name="Ishibashi T."/>
            <person name="Yamashita H."/>
            <person name="Murakawa K."/>
            <person name="Fujimori K."/>
            <person name="Tanai H."/>
            <person name="Kimata M."/>
            <person name="Watanabe M."/>
            <person name="Hiraoka S."/>
            <person name="Chiba Y."/>
            <person name="Ishida S."/>
            <person name="Ono Y."/>
            <person name="Takiguchi S."/>
            <person name="Watanabe S."/>
            <person name="Yosida M."/>
            <person name="Hotuta T."/>
            <person name="Kusano J."/>
            <person name="Kanehori K."/>
            <person name="Takahashi-Fujii A."/>
            <person name="Hara H."/>
            <person name="Tanase T.-O."/>
            <person name="Nomura Y."/>
            <person name="Togiya S."/>
            <person name="Komai F."/>
            <person name="Hara R."/>
            <person name="Takeuchi K."/>
            <person name="Arita M."/>
            <person name="Imose N."/>
            <person name="Musashino K."/>
            <person name="Yuuki H."/>
            <person name="Oshima A."/>
            <person name="Sasaki N."/>
            <person name="Aotsuka S."/>
            <person name="Yoshikawa Y."/>
            <person name="Matsunawa H."/>
            <person name="Ichihara T."/>
            <person name="Shiohata N."/>
            <person name="Sano S."/>
            <person name="Moriya S."/>
            <person name="Momiyama H."/>
            <person name="Satoh N."/>
            <person name="Takami S."/>
            <person name="Terashima Y."/>
            <person name="Suzuki O."/>
            <person name="Nakagawa S."/>
            <person name="Senoh A."/>
            <person name="Mizoguchi H."/>
            <person name="Goto Y."/>
            <person name="Shimizu F."/>
            <person name="Wakebe H."/>
            <person name="Hishigaki H."/>
            <person name="Watanabe T."/>
            <person name="Sugiyama A."/>
            <person name="Takemoto M."/>
            <person name="Kawakami B."/>
            <person name="Yamazaki M."/>
            <person name="Watanabe K."/>
            <person name="Kumagai A."/>
            <person name="Itakura S."/>
            <person name="Fukuzumi Y."/>
            <person name="Fujimori Y."/>
            <person name="Komiyama M."/>
            <person name="Tashiro H."/>
            <person name="Tanigami A."/>
            <person name="Fujiwara T."/>
            <person name="Ono T."/>
            <person name="Yamada K."/>
            <person name="Fujii Y."/>
            <person name="Ozaki K."/>
            <person name="Hirao M."/>
            <person name="Ohmori Y."/>
            <person name="Kawabata A."/>
            <person name="Hikiji T."/>
            <person name="Kobatake N."/>
            <person name="Inagaki H."/>
            <person name="Ikema Y."/>
            <person name="Okamoto S."/>
            <person name="Okitani R."/>
            <person name="Kawakami T."/>
            <person name="Noguchi S."/>
            <person name="Itoh T."/>
            <person name="Shigeta K."/>
            <person name="Senba T."/>
            <person name="Matsumura K."/>
            <person name="Nakajima Y."/>
            <person name="Mizuno T."/>
            <person name="Morinaga M."/>
            <person name="Sasaki M."/>
            <person name="Togashi T."/>
            <person name="Oyama M."/>
            <person name="Hata H."/>
            <person name="Watanabe M."/>
            <person name="Komatsu T."/>
            <person name="Mizushima-Sugano J."/>
            <person name="Satoh T."/>
            <person name="Shirai Y."/>
            <person name="Takahashi Y."/>
            <person name="Nakagawa K."/>
            <person name="Okumura K."/>
            <person name="Nagase T."/>
            <person name="Nomura N."/>
            <person name="Kikuchi H."/>
            <person name="Masuho Y."/>
            <person name="Yamashita R."/>
            <person name="Nakai K."/>
            <person name="Yada T."/>
            <person name="Nakamura Y."/>
            <person name="Ohara O."/>
            <person name="Isogai T."/>
            <person name="Sugano S."/>
        </authorList>
    </citation>
    <scope>NUCLEOTIDE SEQUENCE [LARGE SCALE MRNA]</scope>
    <source>
        <tissue>Thalamus</tissue>
    </source>
</reference>
<reference key="4">
    <citation type="journal article" date="2007" name="BMC Genomics">
        <title>The full-ORF clone resource of the German cDNA consortium.</title>
        <authorList>
            <person name="Bechtel S."/>
            <person name="Rosenfelder H."/>
            <person name="Duda A."/>
            <person name="Schmidt C.P."/>
            <person name="Ernst U."/>
            <person name="Wellenreuther R."/>
            <person name="Mehrle A."/>
            <person name="Schuster C."/>
            <person name="Bahr A."/>
            <person name="Bloecker H."/>
            <person name="Heubner D."/>
            <person name="Hoerlein A."/>
            <person name="Michel G."/>
            <person name="Wedler H."/>
            <person name="Koehrer K."/>
            <person name="Ottenwaelder B."/>
            <person name="Poustka A."/>
            <person name="Wiemann S."/>
            <person name="Schupp I."/>
        </authorList>
    </citation>
    <scope>NUCLEOTIDE SEQUENCE [LARGE SCALE MRNA]</scope>
    <source>
        <tissue>Fetal liver</tissue>
    </source>
</reference>
<reference key="5">
    <citation type="journal article" date="2003" name="Nature">
        <title>The DNA sequence and analysis of human chromosome 6.</title>
        <authorList>
            <person name="Mungall A.J."/>
            <person name="Palmer S.A."/>
            <person name="Sims S.K."/>
            <person name="Edwards C.A."/>
            <person name="Ashurst J.L."/>
            <person name="Wilming L."/>
            <person name="Jones M.C."/>
            <person name="Horton R."/>
            <person name="Hunt S.E."/>
            <person name="Scott C.E."/>
            <person name="Gilbert J.G.R."/>
            <person name="Clamp M.E."/>
            <person name="Bethel G."/>
            <person name="Milne S."/>
            <person name="Ainscough R."/>
            <person name="Almeida J.P."/>
            <person name="Ambrose K.D."/>
            <person name="Andrews T.D."/>
            <person name="Ashwell R.I.S."/>
            <person name="Babbage A.K."/>
            <person name="Bagguley C.L."/>
            <person name="Bailey J."/>
            <person name="Banerjee R."/>
            <person name="Barker D.J."/>
            <person name="Barlow K.F."/>
            <person name="Bates K."/>
            <person name="Beare D.M."/>
            <person name="Beasley H."/>
            <person name="Beasley O."/>
            <person name="Bird C.P."/>
            <person name="Blakey S.E."/>
            <person name="Bray-Allen S."/>
            <person name="Brook J."/>
            <person name="Brown A.J."/>
            <person name="Brown J.Y."/>
            <person name="Burford D.C."/>
            <person name="Burrill W."/>
            <person name="Burton J."/>
            <person name="Carder C."/>
            <person name="Carter N.P."/>
            <person name="Chapman J.C."/>
            <person name="Clark S.Y."/>
            <person name="Clark G."/>
            <person name="Clee C.M."/>
            <person name="Clegg S."/>
            <person name="Cobley V."/>
            <person name="Collier R.E."/>
            <person name="Collins J.E."/>
            <person name="Colman L.K."/>
            <person name="Corby N.R."/>
            <person name="Coville G.J."/>
            <person name="Culley K.M."/>
            <person name="Dhami P."/>
            <person name="Davies J."/>
            <person name="Dunn M."/>
            <person name="Earthrowl M.E."/>
            <person name="Ellington A.E."/>
            <person name="Evans K.A."/>
            <person name="Faulkner L."/>
            <person name="Francis M.D."/>
            <person name="Frankish A."/>
            <person name="Frankland J."/>
            <person name="French L."/>
            <person name="Garner P."/>
            <person name="Garnett J."/>
            <person name="Ghori M.J."/>
            <person name="Gilby L.M."/>
            <person name="Gillson C.J."/>
            <person name="Glithero R.J."/>
            <person name="Grafham D.V."/>
            <person name="Grant M."/>
            <person name="Gribble S."/>
            <person name="Griffiths C."/>
            <person name="Griffiths M.N.D."/>
            <person name="Hall R."/>
            <person name="Halls K.S."/>
            <person name="Hammond S."/>
            <person name="Harley J.L."/>
            <person name="Hart E.A."/>
            <person name="Heath P.D."/>
            <person name="Heathcott R."/>
            <person name="Holmes S.J."/>
            <person name="Howden P.J."/>
            <person name="Howe K.L."/>
            <person name="Howell G.R."/>
            <person name="Huckle E."/>
            <person name="Humphray S.J."/>
            <person name="Humphries M.D."/>
            <person name="Hunt A.R."/>
            <person name="Johnson C.M."/>
            <person name="Joy A.A."/>
            <person name="Kay M."/>
            <person name="Keenan S.J."/>
            <person name="Kimberley A.M."/>
            <person name="King A."/>
            <person name="Laird G.K."/>
            <person name="Langford C."/>
            <person name="Lawlor S."/>
            <person name="Leongamornlert D.A."/>
            <person name="Leversha M."/>
            <person name="Lloyd C.R."/>
            <person name="Lloyd D.M."/>
            <person name="Loveland J.E."/>
            <person name="Lovell J."/>
            <person name="Martin S."/>
            <person name="Mashreghi-Mohammadi M."/>
            <person name="Maslen G.L."/>
            <person name="Matthews L."/>
            <person name="McCann O.T."/>
            <person name="McLaren S.J."/>
            <person name="McLay K."/>
            <person name="McMurray A."/>
            <person name="Moore M.J.F."/>
            <person name="Mullikin J.C."/>
            <person name="Niblett D."/>
            <person name="Nickerson T."/>
            <person name="Novik K.L."/>
            <person name="Oliver K."/>
            <person name="Overton-Larty E.K."/>
            <person name="Parker A."/>
            <person name="Patel R."/>
            <person name="Pearce A.V."/>
            <person name="Peck A.I."/>
            <person name="Phillimore B.J.C.T."/>
            <person name="Phillips S."/>
            <person name="Plumb R.W."/>
            <person name="Porter K.M."/>
            <person name="Ramsey Y."/>
            <person name="Ranby S.A."/>
            <person name="Rice C.M."/>
            <person name="Ross M.T."/>
            <person name="Searle S.M."/>
            <person name="Sehra H.K."/>
            <person name="Sheridan E."/>
            <person name="Skuce C.D."/>
            <person name="Smith S."/>
            <person name="Smith M."/>
            <person name="Spraggon L."/>
            <person name="Squares S.L."/>
            <person name="Steward C.A."/>
            <person name="Sycamore N."/>
            <person name="Tamlyn-Hall G."/>
            <person name="Tester J."/>
            <person name="Theaker A.J."/>
            <person name="Thomas D.W."/>
            <person name="Thorpe A."/>
            <person name="Tracey A."/>
            <person name="Tromans A."/>
            <person name="Tubby B."/>
            <person name="Wall M."/>
            <person name="Wallis J.M."/>
            <person name="West A.P."/>
            <person name="White S.S."/>
            <person name="Whitehead S.L."/>
            <person name="Whittaker H."/>
            <person name="Wild A."/>
            <person name="Willey D.J."/>
            <person name="Wilmer T.E."/>
            <person name="Wood J.M."/>
            <person name="Wray P.W."/>
            <person name="Wyatt J.C."/>
            <person name="Young L."/>
            <person name="Younger R.M."/>
            <person name="Bentley D.R."/>
            <person name="Coulson A."/>
            <person name="Durbin R.M."/>
            <person name="Hubbard T."/>
            <person name="Sulston J.E."/>
            <person name="Dunham I."/>
            <person name="Rogers J."/>
            <person name="Beck S."/>
        </authorList>
    </citation>
    <scope>NUCLEOTIDE SEQUENCE [LARGE SCALE GENOMIC DNA]</scope>
</reference>
<reference key="6">
    <citation type="submission" date="2005-07" db="EMBL/GenBank/DDBJ databases">
        <authorList>
            <person name="Mural R.J."/>
            <person name="Istrail S."/>
            <person name="Sutton G.G."/>
            <person name="Florea L."/>
            <person name="Halpern A.L."/>
            <person name="Mobarry C.M."/>
            <person name="Lippert R."/>
            <person name="Walenz B."/>
            <person name="Shatkay H."/>
            <person name="Dew I."/>
            <person name="Miller J.R."/>
            <person name="Flanigan M.J."/>
            <person name="Edwards N.J."/>
            <person name="Bolanos R."/>
            <person name="Fasulo D."/>
            <person name="Halldorsson B.V."/>
            <person name="Hannenhalli S."/>
            <person name="Turner R."/>
            <person name="Yooseph S."/>
            <person name="Lu F."/>
            <person name="Nusskern D.R."/>
            <person name="Shue B.C."/>
            <person name="Zheng X.H."/>
            <person name="Zhong F."/>
            <person name="Delcher A.L."/>
            <person name="Huson D.H."/>
            <person name="Kravitz S.A."/>
            <person name="Mouchard L."/>
            <person name="Reinert K."/>
            <person name="Remington K.A."/>
            <person name="Clark A.G."/>
            <person name="Waterman M.S."/>
            <person name="Eichler E.E."/>
            <person name="Adams M.D."/>
            <person name="Hunkapiller M.W."/>
            <person name="Myers E.W."/>
            <person name="Venter J.C."/>
        </authorList>
    </citation>
    <scope>NUCLEOTIDE SEQUENCE [LARGE SCALE GENOMIC DNA]</scope>
</reference>
<reference key="7">
    <citation type="journal article" date="2004" name="Genome Res.">
        <title>The status, quality, and expansion of the NIH full-length cDNA project: the Mammalian Gene Collection (MGC).</title>
        <authorList>
            <consortium name="The MGC Project Team"/>
        </authorList>
    </citation>
    <scope>NUCLEOTIDE SEQUENCE [LARGE SCALE MRNA]</scope>
    <source>
        <tissue>Muscle</tissue>
        <tissue>Testis</tissue>
    </source>
</reference>
<reference key="8">
    <citation type="journal article" date="1997" name="Recept. Signal Transduct.">
        <title>Multiple phosphotyrosine phosphatase mRNAs are expressed in the human lung fibroblast cell line WI-38.</title>
        <authorList>
            <person name="Dayton M.A."/>
            <person name="Knobloch T.J."/>
        </authorList>
    </citation>
    <scope>NUCLEOTIDE SEQUENCE [MRNA] OF 80-163</scope>
    <source>
        <tissue>Lung fibroblast</tissue>
    </source>
</reference>
<reference key="9">
    <citation type="journal article" date="2000" name="Eur. J. Immunol.">
        <title>Subcellular localization of intracellular protein tyrosine phosphatases in T cells.</title>
        <authorList>
            <person name="Gjoerloff-Wingren A."/>
            <person name="Saxena M."/>
            <person name="Han S."/>
            <person name="Wang X."/>
            <person name="Alonso A."/>
            <person name="Renedo M."/>
            <person name="Oh P."/>
            <person name="Williams S."/>
            <person name="Schnitzer J."/>
            <person name="Mustelin T."/>
        </authorList>
    </citation>
    <scope>SUBCELLULAR LOCATION</scope>
    <scope>TISSUE SPECIFICITY</scope>
    <scope>DEVELOPMENTAL STAGE</scope>
</reference>
<reference key="10">
    <citation type="journal article" date="2002" name="J. Biol. Chem.">
        <title>The tyrosine phosphatase PRL-1 localizes to the endoplasmic reticulum and the mitotic spindle and is required for normal mitosis.</title>
        <authorList>
            <person name="Wang J."/>
            <person name="Kirby C.E."/>
            <person name="Herbst R."/>
        </authorList>
    </citation>
    <scope>SUBCELLULAR LOCATION</scope>
    <scope>TISSUE SPECIFICITY</scope>
    <scope>MUTAGENESIS OF ASP-71; ASP-72; CYS-104; CYS-170 AND CYS-171</scope>
    <scope>INTERACTION WITH TUBULIN</scope>
    <scope>FUNCTION</scope>
</reference>
<reference key="11">
    <citation type="journal article" date="2002" name="Mol. Cancer Ther.">
        <title>Pentamidine is an inhibitor of PRL phosphatases with anticancer activity.</title>
        <authorList>
            <person name="Pathak M.K."/>
            <person name="Dhawan D."/>
            <person name="Lindner D.J."/>
            <person name="Borden E.C."/>
            <person name="Farver C."/>
            <person name="Yi T."/>
        </authorList>
    </citation>
    <scope>ACTIVITY REGULATION</scope>
</reference>
<reference key="12">
    <citation type="journal article" date="2003" name="Cancer Lett.">
        <title>Enhanced cell cycle progression and down regulation of p21(Cip1/Waf1) by PRL tyrosine phosphatases.</title>
        <authorList>
            <person name="Werner S.R."/>
            <person name="Lee P.A."/>
            <person name="DeCamp M.W."/>
            <person name="Crowell D.N."/>
            <person name="Randall S.K."/>
            <person name="Crowell P.L."/>
        </authorList>
    </citation>
    <scope>FUNCTION</scope>
</reference>
<reference key="13">
    <citation type="journal article" date="2003" name="Cancer Res.">
        <title>PRL-3 and PRL-1 promote cell migration, invasion, and metastasis.</title>
        <authorList>
            <person name="Zeng Q."/>
            <person name="Dong J.-M."/>
            <person name="Guo K."/>
            <person name="Li J."/>
            <person name="Tan H.-X."/>
            <person name="Koh V."/>
            <person name="Pallen C.J."/>
            <person name="Manser E."/>
            <person name="Hong W."/>
        </authorList>
    </citation>
    <scope>FUNCTION</scope>
</reference>
<reference key="14">
    <citation type="journal article" date="2004" name="Toxicon">
        <title>Potential effects of tetrodotoxin exposure to human glial cells postulated using microarray approach.</title>
        <authorList>
            <person name="Raghavendra Prasad H.S."/>
            <person name="Qi Z."/>
            <person name="Srinivasan K.N."/>
            <person name="Gopalakrishnakone P."/>
        </authorList>
    </citation>
    <scope>INDUCTION</scope>
</reference>
<reference key="15">
    <citation type="journal article" date="2011" name="BMC Syst. Biol.">
        <title>Initial characterization of the human central proteome.</title>
        <authorList>
            <person name="Burkard T.R."/>
            <person name="Planyavsky M."/>
            <person name="Kaupe I."/>
            <person name="Breitwieser F.P."/>
            <person name="Buerckstuemmer T."/>
            <person name="Bennett K.L."/>
            <person name="Superti-Furga G."/>
            <person name="Colinge J."/>
        </authorList>
    </citation>
    <scope>IDENTIFICATION BY MASS SPECTROMETRY [LARGE SCALE ANALYSIS]</scope>
</reference>
<reference key="16">
    <citation type="journal article" date="2015" name="Proteomics">
        <title>N-terminome analysis of the human mitochondrial proteome.</title>
        <authorList>
            <person name="Vaca Jacome A.S."/>
            <person name="Rabilloud T."/>
            <person name="Schaeffer-Reiss C."/>
            <person name="Rompais M."/>
            <person name="Ayoub D."/>
            <person name="Lane L."/>
            <person name="Bairoch A."/>
            <person name="Van Dorsselaer A."/>
            <person name="Carapito C."/>
        </authorList>
    </citation>
    <scope>IDENTIFICATION BY MASS SPECTROMETRY [LARGE SCALE ANALYSIS]</scope>
</reference>
<reference key="17">
    <citation type="journal article" date="2005" name="J. Mol. Biol.">
        <title>Trimeric structure of PRL-1 phosphatase reveals an active enzyme conformation and regulation mechanisms.</title>
        <authorList>
            <person name="Jeong D.G."/>
            <person name="Kim S.J."/>
            <person name="Kim J.H."/>
            <person name="Son J.H."/>
            <person name="Park M.R."/>
            <person name="Lim S.M."/>
            <person name="Yoon T.-S."/>
            <person name="Ryu S.E."/>
        </authorList>
    </citation>
    <scope>X-RAY CRYSTALLOGRAPHY (2.7 ANGSTROMS) OF MUTANT SER-104</scope>
    <scope>DISULFIDE BOND</scope>
    <scope>SUBCELLULAR LOCATION</scope>
    <scope>SUBUNIT</scope>
    <scope>MUTAGENESIS OF THR-13 AND GLN-131</scope>
    <scope>IDENTIFICATION BY MASS SPECTROMETRY</scope>
</reference>
<protein>
    <recommendedName>
        <fullName>Protein tyrosine phosphatase type IVA 1</fullName>
        <ecNumber evidence="11">3.1.3.48</ecNumber>
    </recommendedName>
    <alternativeName>
        <fullName>PTP(CAAXI)</fullName>
    </alternativeName>
    <alternativeName>
        <fullName>Protein-tyrosine phosphatase 4a1</fullName>
    </alternativeName>
    <alternativeName>
        <fullName>Protein-tyrosine phosphatase of regenerating liver 1</fullName>
        <shortName>PRL-1</shortName>
    </alternativeName>
</protein>
<keyword id="KW-0002">3D-structure</keyword>
<keyword id="KW-0131">Cell cycle</keyword>
<keyword id="KW-1003">Cell membrane</keyword>
<keyword id="KW-0963">Cytoplasm</keyword>
<keyword id="KW-0206">Cytoskeleton</keyword>
<keyword id="KW-0217">Developmental protein</keyword>
<keyword id="KW-1015">Disulfide bond</keyword>
<keyword id="KW-0256">Endoplasmic reticulum</keyword>
<keyword id="KW-0967">Endosome</keyword>
<keyword id="KW-0378">Hydrolase</keyword>
<keyword id="KW-0449">Lipoprotein</keyword>
<keyword id="KW-0472">Membrane</keyword>
<keyword id="KW-0488">Methylation</keyword>
<keyword id="KW-0539">Nucleus</keyword>
<keyword id="KW-0636">Prenylation</keyword>
<keyword id="KW-0904">Protein phosphatase</keyword>
<keyword id="KW-1267">Proteomics identification</keyword>
<keyword id="KW-1185">Reference proteome</keyword>
<comment type="function">
    <text evidence="5 7 8">Protein tyrosine phosphatase which stimulates progression from G1 into S phase during mitosis. May play a role in the development and maintenance of differentiating epithelial tissues. Enhances cell proliferation, cell motility and invasive activity, and promotes cancer metastasis.</text>
</comment>
<comment type="catalytic activity">
    <reaction evidence="11">
        <text>O-phospho-L-tyrosyl-[protein] + H2O = L-tyrosyl-[protein] + phosphate</text>
        <dbReference type="Rhea" id="RHEA:10684"/>
        <dbReference type="Rhea" id="RHEA-COMP:10136"/>
        <dbReference type="Rhea" id="RHEA-COMP:20101"/>
        <dbReference type="ChEBI" id="CHEBI:15377"/>
        <dbReference type="ChEBI" id="CHEBI:43474"/>
        <dbReference type="ChEBI" id="CHEBI:46858"/>
        <dbReference type="ChEBI" id="CHEBI:61978"/>
        <dbReference type="EC" id="3.1.3.48"/>
    </reaction>
</comment>
<comment type="activity regulation">
    <text evidence="6">Inhibited by sodium orthovanadate and pentamidine.</text>
</comment>
<comment type="subunit">
    <text evidence="1 5 10">Homotrimer. Interacts with ATF5 (By similarity). Interacts with tubulin.</text>
</comment>
<comment type="interaction">
    <interactant intactId="EBI-1058467">
        <id>Q93096</id>
    </interactant>
    <interactant intactId="EBI-11986439">
        <id>Q9NRU3</id>
        <label>CNNM1</label>
    </interactant>
    <organismsDiffer>false</organismsDiffer>
    <experiments>7</experiments>
</comment>
<comment type="subcellular location">
    <subcellularLocation>
        <location evidence="4 10">Cell membrane</location>
        <topology evidence="4 5 10">Lipid-anchor</topology>
    </subcellularLocation>
    <subcellularLocation>
        <location evidence="5">Early endosome</location>
    </subcellularLocation>
    <subcellularLocation>
        <location evidence="5">Endoplasmic reticulum</location>
    </subcellularLocation>
    <subcellularLocation>
        <location evidence="5">Cytoplasm</location>
    </subcellularLocation>
    <subcellularLocation>
        <location evidence="5">Cytoplasm</location>
        <location evidence="5">Cytoskeleton</location>
        <location evidence="5">Spindle</location>
    </subcellularLocation>
    <subcellularLocation>
        <location evidence="2">Nucleus</location>
    </subcellularLocation>
    <text evidence="5">And mitotic spindle.</text>
</comment>
<comment type="tissue specificity">
    <text evidence="4 5">Expressed in bone marrow, lymph nodes, T lymphocytes, spleen, thymus and tonsil. Overexpressed in tumor cell lines.</text>
</comment>
<comment type="developmental stage">
    <text evidence="4">Expressed in fetal liver.</text>
</comment>
<comment type="induction">
    <text evidence="9">Strongly down-regulated upon tetrodotoxin treatment.</text>
</comment>
<comment type="PTM">
    <text>Farnesylated. Farnesylation is required for membrane targeting. Unfarnesylated forms are shifted into the nucleus.</text>
</comment>
<comment type="similarity">
    <text evidence="12">Belongs to the protein-tyrosine phosphatase family.</text>
</comment>
<name>TP4A1_HUMAN</name>
<evidence type="ECO:0000250" key="1"/>
<evidence type="ECO:0000250" key="2">
    <source>
        <dbReference type="UniProtKB" id="Q78EG7"/>
    </source>
</evidence>
<evidence type="ECO:0000255" key="3">
    <source>
        <dbReference type="PROSITE-ProRule" id="PRU00160"/>
    </source>
</evidence>
<evidence type="ECO:0000269" key="4">
    <source>
    </source>
</evidence>
<evidence type="ECO:0000269" key="5">
    <source>
    </source>
</evidence>
<evidence type="ECO:0000269" key="6">
    <source>
    </source>
</evidence>
<evidence type="ECO:0000269" key="7">
    <source>
    </source>
</evidence>
<evidence type="ECO:0000269" key="8">
    <source>
    </source>
</evidence>
<evidence type="ECO:0000269" key="9">
    <source>
    </source>
</evidence>
<evidence type="ECO:0000269" key="10">
    <source>
    </source>
</evidence>
<evidence type="ECO:0000269" key="11">
    <source>
    </source>
</evidence>
<evidence type="ECO:0000305" key="12"/>
<evidence type="ECO:0007829" key="13">
    <source>
        <dbReference type="PDB" id="1RXD"/>
    </source>
</evidence>
<evidence type="ECO:0007829" key="14">
    <source>
        <dbReference type="PDB" id="1XM2"/>
    </source>
</evidence>
<accession>Q93096</accession>
<accession>B2R6C8</accession>
<accession>O00648</accession>
<accession>Q49A54</accession>
<proteinExistence type="evidence at protein level"/>
<organism>
    <name type="scientific">Homo sapiens</name>
    <name type="common">Human</name>
    <dbReference type="NCBI Taxonomy" id="9606"/>
    <lineage>
        <taxon>Eukaryota</taxon>
        <taxon>Metazoa</taxon>
        <taxon>Chordata</taxon>
        <taxon>Craniata</taxon>
        <taxon>Vertebrata</taxon>
        <taxon>Euteleostomi</taxon>
        <taxon>Mammalia</taxon>
        <taxon>Eutheria</taxon>
        <taxon>Euarchontoglires</taxon>
        <taxon>Primates</taxon>
        <taxon>Haplorrhini</taxon>
        <taxon>Catarrhini</taxon>
        <taxon>Hominidae</taxon>
        <taxon>Homo</taxon>
    </lineage>
</organism>
<feature type="chain" id="PRO_0000094780" description="Protein tyrosine phosphatase type IVA 1">
    <location>
        <begin position="1"/>
        <end position="170"/>
    </location>
</feature>
<feature type="propeptide" id="PRO_0000396726" description="Removed in mature form" evidence="12">
    <location>
        <begin position="171"/>
        <end position="173"/>
    </location>
</feature>
<feature type="domain" description="Tyrosine-protein phosphatase" evidence="3">
    <location>
        <begin position="8"/>
        <end position="161"/>
    </location>
</feature>
<feature type="region of interest" description="Interaction with ATF5" evidence="1">
    <location>
        <begin position="97"/>
        <end position="132"/>
    </location>
</feature>
<feature type="active site" description="Proton donor" evidence="12">
    <location>
        <position position="72"/>
    </location>
</feature>
<feature type="active site" description="Phosphocysteine intermediate" evidence="3">
    <location>
        <position position="104"/>
    </location>
</feature>
<feature type="binding site">
    <location>
        <begin position="105"/>
        <end position="110"/>
    </location>
    <ligand>
        <name>phosphate</name>
        <dbReference type="ChEBI" id="CHEBI:43474"/>
    </ligand>
</feature>
<feature type="binding site">
    <location>
        <position position="110"/>
    </location>
    <ligand>
        <name>substrate</name>
    </ligand>
</feature>
<feature type="modified residue" description="Cysteine methyl ester" evidence="12">
    <location>
        <position position="170"/>
    </location>
</feature>
<feature type="lipid moiety-binding region" description="S-farnesyl cysteine" evidence="11">
    <location>
        <position position="170"/>
    </location>
</feature>
<feature type="disulfide bond" evidence="10">
    <location>
        <begin position="49"/>
        <end position="104"/>
    </location>
</feature>
<feature type="mutagenesis site" description="Reduces trimerization." evidence="10">
    <original>T</original>
    <variation>F</variation>
    <location>
        <position position="13"/>
    </location>
</feature>
<feature type="mutagenesis site" description="No effect on catalytic activity." evidence="5">
    <original>D</original>
    <variation>A</variation>
    <location>
        <position position="71"/>
    </location>
</feature>
<feature type="mutagenesis site" description="80% loss of catalytic activity; delay in progression through G2/M." evidence="5">
    <original>D</original>
    <variation>A</variation>
    <location>
        <position position="72"/>
    </location>
</feature>
<feature type="mutagenesis site" description="Abolishes enzymatic activity." evidence="5">
    <original>C</original>
    <variation>S</variation>
    <location>
        <position position="104"/>
    </location>
</feature>
<feature type="mutagenesis site" description="Reduces trimerization." evidence="10">
    <original>Q</original>
    <variation>A</variation>
    <location>
        <position position="131"/>
    </location>
</feature>
<feature type="mutagenesis site" description="Redistributes to the nucleus in resting cells, but still locates to the mitotic spindle in dividing cells. Induces defects in cytokinesis." evidence="5">
    <original>C</original>
    <variation>S</variation>
    <location>
        <position position="170"/>
    </location>
</feature>
<feature type="mutagenesis site" description="No effect on subcellular location." evidence="5">
    <original>C</original>
    <variation>S</variation>
    <location>
        <position position="171"/>
    </location>
</feature>
<feature type="strand" evidence="13">
    <location>
        <begin position="10"/>
        <end position="14"/>
    </location>
</feature>
<feature type="strand" evidence="13">
    <location>
        <begin position="17"/>
        <end position="21"/>
    </location>
</feature>
<feature type="helix" evidence="13">
    <location>
        <begin position="27"/>
        <end position="29"/>
    </location>
</feature>
<feature type="helix" evidence="13">
    <location>
        <begin position="30"/>
        <end position="39"/>
    </location>
</feature>
<feature type="strand" evidence="13">
    <location>
        <begin position="42"/>
        <end position="47"/>
    </location>
</feature>
<feature type="helix" evidence="13">
    <location>
        <begin position="56"/>
        <end position="60"/>
    </location>
</feature>
<feature type="strand" evidence="13">
    <location>
        <begin position="64"/>
        <end position="67"/>
    </location>
</feature>
<feature type="strand" evidence="14">
    <location>
        <begin position="72"/>
        <end position="74"/>
    </location>
</feature>
<feature type="helix" evidence="13">
    <location>
        <begin position="78"/>
        <end position="94"/>
    </location>
</feature>
<feature type="strand" evidence="13">
    <location>
        <begin position="99"/>
        <end position="103"/>
    </location>
</feature>
<feature type="strand" evidence="13">
    <location>
        <begin position="105"/>
        <end position="108"/>
    </location>
</feature>
<feature type="turn" evidence="13">
    <location>
        <begin position="109"/>
        <end position="111"/>
    </location>
</feature>
<feature type="helix" evidence="13">
    <location>
        <begin position="112"/>
        <end position="121"/>
    </location>
</feature>
<feature type="helix" evidence="13">
    <location>
        <begin position="126"/>
        <end position="134"/>
    </location>
</feature>
<feature type="helix" evidence="13">
    <location>
        <begin position="143"/>
        <end position="151"/>
    </location>
</feature>